<accession>C9X1G6</accession>
<keyword id="KW-0051">Antiviral defense</keyword>
<keyword id="KW-0238">DNA-binding</keyword>
<keyword id="KW-0255">Endonuclease</keyword>
<keyword id="KW-0378">Hydrolase</keyword>
<keyword id="KW-0460">Magnesium</keyword>
<keyword id="KW-0464">Manganese</keyword>
<keyword id="KW-0479">Metal-binding</keyword>
<keyword id="KW-0540">Nuclease</keyword>
<feature type="chain" id="PRO_0000429991" description="CRISPR-associated endonuclease Cas1">
    <location>
        <begin position="1"/>
        <end position="304"/>
    </location>
</feature>
<feature type="binding site" evidence="1">
    <location>
        <position position="148"/>
    </location>
    <ligand>
        <name>Mn(2+)</name>
        <dbReference type="ChEBI" id="CHEBI:29035"/>
    </ligand>
</feature>
<feature type="binding site" evidence="1">
    <location>
        <position position="204"/>
    </location>
    <ligand>
        <name>Mn(2+)</name>
        <dbReference type="ChEBI" id="CHEBI:29035"/>
    </ligand>
</feature>
<feature type="binding site" evidence="1">
    <location>
        <position position="219"/>
    </location>
    <ligand>
        <name>Mn(2+)</name>
        <dbReference type="ChEBI" id="CHEBI:29035"/>
    </ligand>
</feature>
<proteinExistence type="inferred from homology"/>
<reference key="1">
    <citation type="journal article" date="2009" name="Genome Biol.">
        <title>NeMeSys: a biological resource for narrowing the gap between sequence and function in the human pathogen Neisseria meningitidis.</title>
        <authorList>
            <person name="Rusniok C."/>
            <person name="Vallenet D."/>
            <person name="Floquet S."/>
            <person name="Ewles H."/>
            <person name="Mouze-Soulama C."/>
            <person name="Brown D."/>
            <person name="Lajus A."/>
            <person name="Buchrieser C."/>
            <person name="Medigue C."/>
            <person name="Glaser P."/>
            <person name="Pelicic V."/>
        </authorList>
    </citation>
    <scope>NUCLEOTIDE SEQUENCE [LARGE SCALE GENOMIC DNA]</scope>
    <source>
        <strain>8013</strain>
    </source>
</reference>
<reference key="2">
    <citation type="journal article" date="2013" name="Mol. Cell">
        <title>Processing-independent CRISPR RNAs limit natural transformation in Neisseria meningitidis.</title>
        <authorList>
            <person name="Zhang Y."/>
            <person name="Heidrich N."/>
            <person name="Ampattu B.J."/>
            <person name="Gunderson C.W."/>
            <person name="Seifert H.S."/>
            <person name="Schoen C."/>
            <person name="Vogel J."/>
            <person name="Sontheimer E.J."/>
        </authorList>
    </citation>
    <scope>DISRUPTION PHENOTYPE</scope>
    <source>
        <strain>8013</strain>
    </source>
</reference>
<gene>
    <name evidence="1" type="primary">cas1</name>
    <name type="ordered locus">NMV_1994</name>
</gene>
<protein>
    <recommendedName>
        <fullName evidence="1">CRISPR-associated endonuclease Cas1</fullName>
        <ecNumber evidence="1">3.1.-.-</ecNumber>
    </recommendedName>
</protein>
<evidence type="ECO:0000255" key="1">
    <source>
        <dbReference type="HAMAP-Rule" id="MF_01470"/>
    </source>
</evidence>
<evidence type="ECO:0000269" key="2">
    <source>
    </source>
</evidence>
<dbReference type="EC" id="3.1.-.-" evidence="1"/>
<dbReference type="EMBL" id="FM999788">
    <property type="protein sequence ID" value="CAX50780.1"/>
    <property type="molecule type" value="Genomic_DNA"/>
</dbReference>
<dbReference type="RefSeq" id="WP_002256914.1">
    <property type="nucleotide sequence ID" value="NC_017501.1"/>
</dbReference>
<dbReference type="SMR" id="C9X1G6"/>
<dbReference type="KEGG" id="nmt:NMV_1994"/>
<dbReference type="PATRIC" id="fig|604162.3.peg.2306"/>
<dbReference type="HOGENOM" id="CLU_055263_1_0_4"/>
<dbReference type="Proteomes" id="UP000002076">
    <property type="component" value="Chromosome"/>
</dbReference>
<dbReference type="GO" id="GO:0003677">
    <property type="term" value="F:DNA binding"/>
    <property type="evidence" value="ECO:0007669"/>
    <property type="project" value="UniProtKB-KW"/>
</dbReference>
<dbReference type="GO" id="GO:0004520">
    <property type="term" value="F:DNA endonuclease activity"/>
    <property type="evidence" value="ECO:0007669"/>
    <property type="project" value="InterPro"/>
</dbReference>
<dbReference type="GO" id="GO:0046872">
    <property type="term" value="F:metal ion binding"/>
    <property type="evidence" value="ECO:0007669"/>
    <property type="project" value="UniProtKB-UniRule"/>
</dbReference>
<dbReference type="GO" id="GO:0051607">
    <property type="term" value="P:defense response to virus"/>
    <property type="evidence" value="ECO:0007669"/>
    <property type="project" value="UniProtKB-UniRule"/>
</dbReference>
<dbReference type="GO" id="GO:0043571">
    <property type="term" value="P:maintenance of CRISPR repeat elements"/>
    <property type="evidence" value="ECO:0007669"/>
    <property type="project" value="UniProtKB-UniRule"/>
</dbReference>
<dbReference type="CDD" id="cd09720">
    <property type="entry name" value="Cas1_II"/>
    <property type="match status" value="1"/>
</dbReference>
<dbReference type="Gene3D" id="1.20.120.920">
    <property type="entry name" value="CRISPR-associated endonuclease Cas1, C-terminal domain"/>
    <property type="match status" value="1"/>
</dbReference>
<dbReference type="HAMAP" id="MF_01470">
    <property type="entry name" value="Cas1"/>
    <property type="match status" value="1"/>
</dbReference>
<dbReference type="InterPro" id="IPR050646">
    <property type="entry name" value="Cas1"/>
</dbReference>
<dbReference type="InterPro" id="IPR002729">
    <property type="entry name" value="CRISPR-assoc_Cas1"/>
</dbReference>
<dbReference type="InterPro" id="IPR042206">
    <property type="entry name" value="CRISPR-assoc_Cas1_C"/>
</dbReference>
<dbReference type="InterPro" id="IPR019855">
    <property type="entry name" value="CRISPR-assoc_Cas1_NMENI"/>
</dbReference>
<dbReference type="NCBIfam" id="TIGR00287">
    <property type="entry name" value="cas1"/>
    <property type="match status" value="1"/>
</dbReference>
<dbReference type="NCBIfam" id="TIGR03639">
    <property type="entry name" value="cas1_NMENI"/>
    <property type="match status" value="1"/>
</dbReference>
<dbReference type="PANTHER" id="PTHR34353">
    <property type="entry name" value="CRISPR-ASSOCIATED ENDONUCLEASE CAS1 1"/>
    <property type="match status" value="1"/>
</dbReference>
<dbReference type="PANTHER" id="PTHR34353:SF2">
    <property type="entry name" value="CRISPR-ASSOCIATED ENDONUCLEASE CAS1 1"/>
    <property type="match status" value="1"/>
</dbReference>
<dbReference type="Pfam" id="PF01867">
    <property type="entry name" value="Cas_Cas1"/>
    <property type="match status" value="1"/>
</dbReference>
<sequence length="304" mass="34471">MTWRSLLIQNGGKLSLQRRQLLIQQNGESHTVPLEDIAVIIIENRETLITAPLLSALAEHGATLLTCDEQFLPCGQWLPYAQYHRQLKILKLQLNISEPLKKQLWQHIVRQKILNQAFVADETGNDLAAKRLRTLASEVRSGDTGNREAQAAALYFQALFGEKFTRNDNNAVNAALNYTYAVLRAAVARTLTLYGWLPALGLFHRSELNPFNLADDFIEPLRPLADLTVIHLYEQGRLKAELTPGIKQHLIKTLHYQISIERQHFSTLAAIDKMVSSFQAGVTDKNAKQLKLPEILPLKEYQYE</sequence>
<organism>
    <name type="scientific">Neisseria meningitidis serogroup C (strain 8013)</name>
    <dbReference type="NCBI Taxonomy" id="604162"/>
    <lineage>
        <taxon>Bacteria</taxon>
        <taxon>Pseudomonadati</taxon>
        <taxon>Pseudomonadota</taxon>
        <taxon>Betaproteobacteria</taxon>
        <taxon>Neisseriales</taxon>
        <taxon>Neisseriaceae</taxon>
        <taxon>Neisseria</taxon>
    </lineage>
</organism>
<name>CAS1_NEIM8</name>
<comment type="function">
    <text evidence="1">CRISPR (clustered regularly interspaced short palindromic repeat), is an adaptive immune system that provides protection against mobile genetic elements (viruses, transposable elements and conjugative plasmids). CRISPR clusters contain spacers, sequences complementary to antecedent mobile elements, and target invading nucleic acids. CRISPR clusters are transcribed and processed into CRISPR RNA (crRNA). Acts as a dsDNA endonuclease. Involved in the integration of spacer DNA into the CRISPR cassette.</text>
</comment>
<comment type="cofactor">
    <cofactor evidence="1">
        <name>Mg(2+)</name>
        <dbReference type="ChEBI" id="CHEBI:18420"/>
    </cofactor>
    <cofactor evidence="1">
        <name>Mn(2+)</name>
        <dbReference type="ChEBI" id="CHEBI:29035"/>
    </cofactor>
</comment>
<comment type="subunit">
    <text evidence="1">Homodimer, forms a heterotetramer with a Cas2 homodimer.</text>
</comment>
<comment type="disruption phenotype">
    <text evidence="2">No effect on CRISPR interference during plasmid transformation.</text>
</comment>
<comment type="similarity">
    <text evidence="1">Belongs to the CRISPR-associated endonuclease Cas1 family.</text>
</comment>